<organism>
    <name type="scientific">Fasciola hepatica</name>
    <name type="common">Liver fluke</name>
    <dbReference type="NCBI Taxonomy" id="6192"/>
    <lineage>
        <taxon>Eukaryota</taxon>
        <taxon>Metazoa</taxon>
        <taxon>Spiralia</taxon>
        <taxon>Lophotrochozoa</taxon>
        <taxon>Platyhelminthes</taxon>
        <taxon>Trematoda</taxon>
        <taxon>Digenea</taxon>
        <taxon>Plagiorchiida</taxon>
        <taxon>Echinostomata</taxon>
        <taxon>Echinostomatoidea</taxon>
        <taxon>Fasciolidae</taxon>
        <taxon>Fasciola</taxon>
    </lineage>
</organism>
<name>CATL3_FASHE</name>
<accession>P80532</accession>
<proteinExistence type="evidence at protein level"/>
<feature type="chain" id="PRO_0000050540" description="Putative cathepsin L3">
    <location>
        <begin position="1"/>
        <end position="19" status="greater than"/>
    </location>
</feature>
<feature type="non-terminal residue">
    <location>
        <position position="19"/>
    </location>
</feature>
<reference key="1">
    <citation type="journal article" date="1995" name="Biochem. Biophys. Res. Commun.">
        <title>Fasciola hepatica: rapid identification of newly excysted juvenile proteins.</title>
        <authorList>
            <person name="Tkalcevic J."/>
            <person name="Ashman K."/>
            <person name="Meeusen E."/>
        </authorList>
    </citation>
    <scope>PROTEIN SEQUENCE</scope>
</reference>
<protein>
    <recommendedName>
        <fullName>Putative cathepsin L3</fullName>
        <ecNumber>3.4.22.15</ecNumber>
    </recommendedName>
    <alternativeName>
        <fullName>Newly excysted juvenile protein 8</fullName>
    </alternativeName>
</protein>
<dbReference type="EC" id="3.4.22.15"/>
<dbReference type="ChEMBL" id="CHEMBL5169140"/>
<dbReference type="BRENDA" id="3.4.22.B62">
    <property type="organism ID" value="2230"/>
</dbReference>
<dbReference type="GO" id="GO:0005764">
    <property type="term" value="C:lysosome"/>
    <property type="evidence" value="ECO:0007669"/>
    <property type="project" value="UniProtKB-SubCell"/>
</dbReference>
<dbReference type="GO" id="GO:0004197">
    <property type="term" value="F:cysteine-type endopeptidase activity"/>
    <property type="evidence" value="ECO:0007669"/>
    <property type="project" value="UniProtKB-EC"/>
</dbReference>
<dbReference type="GO" id="GO:0006508">
    <property type="term" value="P:proteolysis"/>
    <property type="evidence" value="ECO:0007669"/>
    <property type="project" value="UniProtKB-KW"/>
</dbReference>
<sequence>DVPASIDWREYGYVTEVKD</sequence>
<comment type="function">
    <text>Thiol protease.</text>
</comment>
<comment type="catalytic activity">
    <reaction>
        <text>Specificity close to that of papain. As compared to cathepsin B, cathepsin L exhibits higher activity toward protein substrates, but has little activity on Z-Arg-Arg-NHMec, and no peptidyl-dipeptidase activity.</text>
        <dbReference type="EC" id="3.4.22.15"/>
    </reaction>
</comment>
<comment type="subunit">
    <text evidence="4">Dimer of a heavy and a light chain linked by disulfide bonds.</text>
</comment>
<comment type="subcellular location">
    <subcellularLocation>
        <location evidence="4">Lysosome</location>
    </subcellularLocation>
</comment>
<comment type="developmental stage">
    <text>Expressed at the newly excysted juvenile stage.</text>
</comment>
<comment type="similarity">
    <text evidence="1 2 3">Belongs to the peptidase C1 family.</text>
</comment>
<keyword id="KW-0903">Direct protein sequencing</keyword>
<keyword id="KW-1015">Disulfide bond</keyword>
<keyword id="KW-0378">Hydrolase</keyword>
<keyword id="KW-0458">Lysosome</keyword>
<keyword id="KW-0645">Protease</keyword>
<keyword id="KW-0788">Thiol protease</keyword>
<evidence type="ECO:0000255" key="1">
    <source>
        <dbReference type="PROSITE-ProRule" id="PRU10088"/>
    </source>
</evidence>
<evidence type="ECO:0000255" key="2">
    <source>
        <dbReference type="PROSITE-ProRule" id="PRU10089"/>
    </source>
</evidence>
<evidence type="ECO:0000255" key="3">
    <source>
        <dbReference type="PROSITE-ProRule" id="PRU10090"/>
    </source>
</evidence>
<evidence type="ECO:0000305" key="4"/>